<accession>B2KCQ1</accession>
<sequence>MAVVLRLQRVGKKQQPQYRIVAIEKKSAVGSEAKEVVGHYNPCNAKAADQIKLNQERYDYWVKVGAKASPTVAALAKKASAK</sequence>
<proteinExistence type="inferred from homology"/>
<name>RS16_ELUMP</name>
<reference key="1">
    <citation type="journal article" date="2009" name="Appl. Environ. Microbiol.">
        <title>Genomic analysis of 'Elusimicrobium minutum,' the first cultivated representative of the phylum 'Elusimicrobia' (formerly termite group 1).</title>
        <authorList>
            <person name="Herlemann D.P.R."/>
            <person name="Geissinger O."/>
            <person name="Ikeda-Ohtsubo W."/>
            <person name="Kunin V."/>
            <person name="Sun H."/>
            <person name="Lapidus A."/>
            <person name="Hugenholtz P."/>
            <person name="Brune A."/>
        </authorList>
    </citation>
    <scope>NUCLEOTIDE SEQUENCE [LARGE SCALE GENOMIC DNA]</scope>
    <source>
        <strain>Pei191</strain>
    </source>
</reference>
<dbReference type="EMBL" id="CP001055">
    <property type="protein sequence ID" value="ACC98297.1"/>
    <property type="molecule type" value="Genomic_DNA"/>
</dbReference>
<dbReference type="RefSeq" id="WP_012414912.1">
    <property type="nucleotide sequence ID" value="NC_010644.1"/>
</dbReference>
<dbReference type="SMR" id="B2KCQ1"/>
<dbReference type="STRING" id="445932.Emin_0742"/>
<dbReference type="KEGG" id="emi:Emin_0742"/>
<dbReference type="HOGENOM" id="CLU_100590_5_1_0"/>
<dbReference type="OrthoDB" id="9807878at2"/>
<dbReference type="Proteomes" id="UP000001029">
    <property type="component" value="Chromosome"/>
</dbReference>
<dbReference type="GO" id="GO:0005737">
    <property type="term" value="C:cytoplasm"/>
    <property type="evidence" value="ECO:0007669"/>
    <property type="project" value="UniProtKB-ARBA"/>
</dbReference>
<dbReference type="GO" id="GO:0015935">
    <property type="term" value="C:small ribosomal subunit"/>
    <property type="evidence" value="ECO:0007669"/>
    <property type="project" value="TreeGrafter"/>
</dbReference>
<dbReference type="GO" id="GO:0003735">
    <property type="term" value="F:structural constituent of ribosome"/>
    <property type="evidence" value="ECO:0007669"/>
    <property type="project" value="InterPro"/>
</dbReference>
<dbReference type="GO" id="GO:0006412">
    <property type="term" value="P:translation"/>
    <property type="evidence" value="ECO:0007669"/>
    <property type="project" value="UniProtKB-UniRule"/>
</dbReference>
<dbReference type="Gene3D" id="3.30.1320.10">
    <property type="match status" value="1"/>
</dbReference>
<dbReference type="HAMAP" id="MF_00385">
    <property type="entry name" value="Ribosomal_bS16"/>
    <property type="match status" value="1"/>
</dbReference>
<dbReference type="InterPro" id="IPR000307">
    <property type="entry name" value="Ribosomal_bS16"/>
</dbReference>
<dbReference type="InterPro" id="IPR023803">
    <property type="entry name" value="Ribosomal_bS16_dom_sf"/>
</dbReference>
<dbReference type="NCBIfam" id="TIGR00002">
    <property type="entry name" value="S16"/>
    <property type="match status" value="1"/>
</dbReference>
<dbReference type="PANTHER" id="PTHR12919">
    <property type="entry name" value="30S RIBOSOMAL PROTEIN S16"/>
    <property type="match status" value="1"/>
</dbReference>
<dbReference type="PANTHER" id="PTHR12919:SF20">
    <property type="entry name" value="SMALL RIBOSOMAL SUBUNIT PROTEIN BS16M"/>
    <property type="match status" value="1"/>
</dbReference>
<dbReference type="Pfam" id="PF00886">
    <property type="entry name" value="Ribosomal_S16"/>
    <property type="match status" value="1"/>
</dbReference>
<dbReference type="SUPFAM" id="SSF54565">
    <property type="entry name" value="Ribosomal protein S16"/>
    <property type="match status" value="1"/>
</dbReference>
<gene>
    <name evidence="1" type="primary">rpsP</name>
    <name type="ordered locus">Emin_0742</name>
</gene>
<feature type="chain" id="PRO_1000196393" description="Small ribosomal subunit protein bS16">
    <location>
        <begin position="1"/>
        <end position="82"/>
    </location>
</feature>
<comment type="similarity">
    <text evidence="1">Belongs to the bacterial ribosomal protein bS16 family.</text>
</comment>
<keyword id="KW-1185">Reference proteome</keyword>
<keyword id="KW-0687">Ribonucleoprotein</keyword>
<keyword id="KW-0689">Ribosomal protein</keyword>
<evidence type="ECO:0000255" key="1">
    <source>
        <dbReference type="HAMAP-Rule" id="MF_00385"/>
    </source>
</evidence>
<evidence type="ECO:0000305" key="2"/>
<organism>
    <name type="scientific">Elusimicrobium minutum (strain Pei191)</name>
    <dbReference type="NCBI Taxonomy" id="445932"/>
    <lineage>
        <taxon>Bacteria</taxon>
        <taxon>Pseudomonadati</taxon>
        <taxon>Elusimicrobiota</taxon>
        <taxon>Elusimicrobia</taxon>
        <taxon>Elusimicrobiales</taxon>
        <taxon>Elusimicrobiaceae</taxon>
        <taxon>Elusimicrobium</taxon>
    </lineage>
</organism>
<protein>
    <recommendedName>
        <fullName evidence="1">Small ribosomal subunit protein bS16</fullName>
    </recommendedName>
    <alternativeName>
        <fullName evidence="2">30S ribosomal protein S16</fullName>
    </alternativeName>
</protein>